<evidence type="ECO:0000255" key="1">
    <source>
        <dbReference type="HAMAP-Rule" id="MF_01218"/>
    </source>
</evidence>
<feature type="chain" id="PRO_1000139146" description="Uracil phosphoribosyltransferase">
    <location>
        <begin position="1"/>
        <end position="208"/>
    </location>
</feature>
<feature type="binding site" evidence="1">
    <location>
        <position position="78"/>
    </location>
    <ligand>
        <name>5-phospho-alpha-D-ribose 1-diphosphate</name>
        <dbReference type="ChEBI" id="CHEBI:58017"/>
    </ligand>
</feature>
<feature type="binding site" evidence="1">
    <location>
        <position position="103"/>
    </location>
    <ligand>
        <name>5-phospho-alpha-D-ribose 1-diphosphate</name>
        <dbReference type="ChEBI" id="CHEBI:58017"/>
    </ligand>
</feature>
<feature type="binding site" evidence="1">
    <location>
        <begin position="130"/>
        <end position="138"/>
    </location>
    <ligand>
        <name>5-phospho-alpha-D-ribose 1-diphosphate</name>
        <dbReference type="ChEBI" id="CHEBI:58017"/>
    </ligand>
</feature>
<feature type="binding site" evidence="1">
    <location>
        <position position="193"/>
    </location>
    <ligand>
        <name>uracil</name>
        <dbReference type="ChEBI" id="CHEBI:17568"/>
    </ligand>
</feature>
<feature type="binding site" evidence="1">
    <location>
        <begin position="198"/>
        <end position="200"/>
    </location>
    <ligand>
        <name>uracil</name>
        <dbReference type="ChEBI" id="CHEBI:17568"/>
    </ligand>
</feature>
<feature type="binding site" evidence="1">
    <location>
        <position position="199"/>
    </location>
    <ligand>
        <name>5-phospho-alpha-D-ribose 1-diphosphate</name>
        <dbReference type="ChEBI" id="CHEBI:58017"/>
    </ligand>
</feature>
<reference key="1">
    <citation type="journal article" date="2008" name="J. Bacteriol.">
        <title>Complete genome sequence of Neisseria gonorrhoeae NCCP11945.</title>
        <authorList>
            <person name="Chung G.T."/>
            <person name="Yoo J.S."/>
            <person name="Oh H.B."/>
            <person name="Lee Y.S."/>
            <person name="Cha S.H."/>
            <person name="Kim S.J."/>
            <person name="Yoo C.K."/>
        </authorList>
    </citation>
    <scope>NUCLEOTIDE SEQUENCE [LARGE SCALE GENOMIC DNA]</scope>
    <source>
        <strain>NCCP11945</strain>
    </source>
</reference>
<protein>
    <recommendedName>
        <fullName evidence="1">Uracil phosphoribosyltransferase</fullName>
        <ecNumber evidence="1">2.4.2.9</ecNumber>
    </recommendedName>
    <alternativeName>
        <fullName evidence="1">UMP pyrophosphorylase</fullName>
    </alternativeName>
    <alternativeName>
        <fullName evidence="1">UPRTase</fullName>
    </alternativeName>
</protein>
<organism>
    <name type="scientific">Neisseria gonorrhoeae (strain NCCP11945)</name>
    <dbReference type="NCBI Taxonomy" id="521006"/>
    <lineage>
        <taxon>Bacteria</taxon>
        <taxon>Pseudomonadati</taxon>
        <taxon>Pseudomonadota</taxon>
        <taxon>Betaproteobacteria</taxon>
        <taxon>Neisseriales</taxon>
        <taxon>Neisseriaceae</taxon>
        <taxon>Neisseria</taxon>
    </lineage>
</organism>
<dbReference type="EC" id="2.4.2.9" evidence="1"/>
<dbReference type="EMBL" id="CP001050">
    <property type="protein sequence ID" value="ACF29201.1"/>
    <property type="molecule type" value="Genomic_DNA"/>
</dbReference>
<dbReference type="RefSeq" id="WP_003690802.1">
    <property type="nucleotide sequence ID" value="NC_011035.1"/>
</dbReference>
<dbReference type="SMR" id="B4RK50"/>
<dbReference type="GeneID" id="66752692"/>
<dbReference type="KEGG" id="ngk:NGK_0510"/>
<dbReference type="HOGENOM" id="CLU_067096_2_2_4"/>
<dbReference type="UniPathway" id="UPA00574">
    <property type="reaction ID" value="UER00636"/>
</dbReference>
<dbReference type="Proteomes" id="UP000002564">
    <property type="component" value="Chromosome"/>
</dbReference>
<dbReference type="GO" id="GO:0005525">
    <property type="term" value="F:GTP binding"/>
    <property type="evidence" value="ECO:0007669"/>
    <property type="project" value="UniProtKB-KW"/>
</dbReference>
<dbReference type="GO" id="GO:0000287">
    <property type="term" value="F:magnesium ion binding"/>
    <property type="evidence" value="ECO:0007669"/>
    <property type="project" value="UniProtKB-UniRule"/>
</dbReference>
<dbReference type="GO" id="GO:0004845">
    <property type="term" value="F:uracil phosphoribosyltransferase activity"/>
    <property type="evidence" value="ECO:0007669"/>
    <property type="project" value="UniProtKB-UniRule"/>
</dbReference>
<dbReference type="GO" id="GO:0044206">
    <property type="term" value="P:UMP salvage"/>
    <property type="evidence" value="ECO:0007669"/>
    <property type="project" value="UniProtKB-UniRule"/>
</dbReference>
<dbReference type="GO" id="GO:0006223">
    <property type="term" value="P:uracil salvage"/>
    <property type="evidence" value="ECO:0007669"/>
    <property type="project" value="InterPro"/>
</dbReference>
<dbReference type="CDD" id="cd06223">
    <property type="entry name" value="PRTases_typeI"/>
    <property type="match status" value="1"/>
</dbReference>
<dbReference type="FunFam" id="3.40.50.2020:FF:000003">
    <property type="entry name" value="Uracil phosphoribosyltransferase"/>
    <property type="match status" value="1"/>
</dbReference>
<dbReference type="Gene3D" id="3.40.50.2020">
    <property type="match status" value="1"/>
</dbReference>
<dbReference type="HAMAP" id="MF_01218_B">
    <property type="entry name" value="Upp_B"/>
    <property type="match status" value="1"/>
</dbReference>
<dbReference type="InterPro" id="IPR000836">
    <property type="entry name" value="PRibTrfase_dom"/>
</dbReference>
<dbReference type="InterPro" id="IPR029057">
    <property type="entry name" value="PRTase-like"/>
</dbReference>
<dbReference type="InterPro" id="IPR034332">
    <property type="entry name" value="Upp_B"/>
</dbReference>
<dbReference type="InterPro" id="IPR050054">
    <property type="entry name" value="UPRTase/APRTase"/>
</dbReference>
<dbReference type="InterPro" id="IPR005765">
    <property type="entry name" value="Ura_phspho_trans"/>
</dbReference>
<dbReference type="NCBIfam" id="NF001097">
    <property type="entry name" value="PRK00129.1"/>
    <property type="match status" value="1"/>
</dbReference>
<dbReference type="NCBIfam" id="TIGR01091">
    <property type="entry name" value="upp"/>
    <property type="match status" value="1"/>
</dbReference>
<dbReference type="PANTHER" id="PTHR32315">
    <property type="entry name" value="ADENINE PHOSPHORIBOSYLTRANSFERASE"/>
    <property type="match status" value="1"/>
</dbReference>
<dbReference type="PANTHER" id="PTHR32315:SF4">
    <property type="entry name" value="URACIL PHOSPHORIBOSYLTRANSFERASE, CHLOROPLASTIC"/>
    <property type="match status" value="1"/>
</dbReference>
<dbReference type="Pfam" id="PF14681">
    <property type="entry name" value="UPRTase"/>
    <property type="match status" value="1"/>
</dbReference>
<dbReference type="SUPFAM" id="SSF53271">
    <property type="entry name" value="PRTase-like"/>
    <property type="match status" value="1"/>
</dbReference>
<name>UPP_NEIG2</name>
<proteinExistence type="inferred from homology"/>
<comment type="function">
    <text evidence="1">Catalyzes the conversion of uracil and 5-phospho-alpha-D-ribose 1-diphosphate (PRPP) to UMP and diphosphate.</text>
</comment>
<comment type="catalytic activity">
    <reaction evidence="1">
        <text>UMP + diphosphate = 5-phospho-alpha-D-ribose 1-diphosphate + uracil</text>
        <dbReference type="Rhea" id="RHEA:13017"/>
        <dbReference type="ChEBI" id="CHEBI:17568"/>
        <dbReference type="ChEBI" id="CHEBI:33019"/>
        <dbReference type="ChEBI" id="CHEBI:57865"/>
        <dbReference type="ChEBI" id="CHEBI:58017"/>
        <dbReference type="EC" id="2.4.2.9"/>
    </reaction>
</comment>
<comment type="cofactor">
    <cofactor evidence="1">
        <name>Mg(2+)</name>
        <dbReference type="ChEBI" id="CHEBI:18420"/>
    </cofactor>
    <text evidence="1">Binds 1 Mg(2+) ion per subunit. The magnesium is bound as Mg-PRPP.</text>
</comment>
<comment type="activity regulation">
    <text evidence="1">Allosterically activated by GTP.</text>
</comment>
<comment type="pathway">
    <text evidence="1">Pyrimidine metabolism; UMP biosynthesis via salvage pathway; UMP from uracil: step 1/1.</text>
</comment>
<comment type="similarity">
    <text evidence="1">Belongs to the UPRTase family.</text>
</comment>
<accession>B4RK50</accession>
<keyword id="KW-0021">Allosteric enzyme</keyword>
<keyword id="KW-0328">Glycosyltransferase</keyword>
<keyword id="KW-0342">GTP-binding</keyword>
<keyword id="KW-0460">Magnesium</keyword>
<keyword id="KW-0547">Nucleotide-binding</keyword>
<keyword id="KW-0808">Transferase</keyword>
<sequence length="208" mass="22878">MNVNVINHPLVRHKLTLMREADCSTYKFRTLTTELARLMAYEASRDFEIEKYLIDGWCGQIEGDRIKGKTLTVVPILRAGLGMLDGVLDLIPTAKISVVGLQRDEETLKPISYFEKFVDSMDERPALIIDPMLATGGSMVATIDLLKEKGCRNIKALVLVAAPEGVKAVNDAHPDVTIYTAALDSRLNENGYIIPGLGDAGDKIFGTR</sequence>
<gene>
    <name evidence="1" type="primary">upp</name>
    <name type="ordered locus">NGK_0510</name>
</gene>